<protein>
    <recommendedName>
        <fullName evidence="7">(S)-8-oxocitronellyl enol synthase</fullName>
        <ecNumber evidence="1 2 3 4">1.3.1.122</ecNumber>
    </recommendedName>
    <alternativeName>
        <fullName evidence="6">Iridoid synthase</fullName>
        <shortName evidence="6">ISY</shortName>
    </alternativeName>
</protein>
<reference key="1">
    <citation type="journal article" date="2012" name="Nature">
        <title>An alternative route to cyclic terpenes by reductive cyclization in iridoid biosynthesis.</title>
        <authorList>
            <person name="Geu-Flores F."/>
            <person name="Sherden N.H."/>
            <person name="Courdavault V."/>
            <person name="Burlat V."/>
            <person name="Glenn W.S."/>
            <person name="Wu C."/>
            <person name="Nims E."/>
            <person name="Cui Y."/>
            <person name="O'Connor S.E."/>
        </authorList>
    </citation>
    <scope>NUCLEOTIDE SEQUENCE [MRNA]</scope>
    <scope>FUNCTION</scope>
    <scope>CATALYTIC ACTIVITY</scope>
    <scope>BIOPHYSICOCHEMICAL PROPERTIES</scope>
    <scope>SUBCELLULAR LOCATION</scope>
    <scope>TISSUE SPECIFICITY</scope>
    <scope>SUBUNIT</scope>
</reference>
<reference key="2">
    <citation type="journal article" date="2019" name="Nat. Chem. Biol.">
        <title>Uncoupled activation and cyclization in catmint reductive terpenoid biosynthesis.</title>
        <authorList>
            <person name="Lichman B.R."/>
            <person name="Kamileen M.O."/>
            <person name="Titchiner G.R."/>
            <person name="Saalbach G."/>
            <person name="Stevenson C.E.M."/>
            <person name="Lawson D.M."/>
            <person name="O'Connor S.E."/>
        </authorList>
    </citation>
    <scope>FUNCTION</scope>
    <scope>CATALYTIC ACTIVITY</scope>
</reference>
<reference key="3">
    <citation type="journal article" date="2015" name="Angew. Chem. Int. Ed. Engl.">
        <title>Structures of iridoid synthase from Cantharanthus roseus with bound NAD(+), NADPH, or NAD(+)/10-oxogeranial: reaction mechanisms.</title>
        <authorList>
            <person name="Hu Y."/>
            <person name="Liu W."/>
            <person name="Malwal S.R."/>
            <person name="Zheng Y."/>
            <person name="Feng X."/>
            <person name="Ko T.P."/>
            <person name="Chen C.C."/>
            <person name="Xu Z."/>
            <person name="Liu M."/>
            <person name="Han X."/>
            <person name="Gao J."/>
            <person name="Oldfield E."/>
            <person name="Guo R.T."/>
        </authorList>
    </citation>
    <scope>X-RAY CRYSTALLOGRAPHY (1.95 ANGSTROMS) OF 26-388 IN COMPLEX WITH NADP AND SUBSTRATE</scope>
    <scope>CATALYTIC ACTIVITY</scope>
    <scope>ACTIVE SITES</scope>
    <scope>MUTAGENESIS OF LYS-146; PHE-149; TYR-178; PHE-342; ALA-346 AND SER-349</scope>
</reference>
<reference key="4">
    <citation type="journal article" date="2016" name="J. Struct. Biol.">
        <title>Structure of iridoid synthase in complex with NADP(+)/8-oxogeranial reveals the structural basis of its substrate specificity.</title>
        <authorList>
            <person name="Qin L."/>
            <person name="Zhu Y."/>
            <person name="Ding Z."/>
            <person name="Zhang X."/>
            <person name="Ye S."/>
            <person name="Zhang R."/>
        </authorList>
    </citation>
    <scope>X-RAY CRYSTALLOGRAPHY (2.20 ANGSTROMS) OF 26-388 IN COMPLEX WITH NADP AND SUBSTRATE</scope>
    <scope>CATALYTIC ACTIVITY</scope>
    <scope>BIOPHYSICOCHEMICAL PROPERTIES</scope>
    <scope>SUBUNIT</scope>
</reference>
<reference key="5">
    <citation type="journal article" date="2016" name="Nat. Chem. Biol.">
        <title>Structural determinants of reductive terpene cyclization in iridoid biosynthesis.</title>
        <authorList>
            <person name="Kries H."/>
            <person name="Caputi L."/>
            <person name="Stevenson C.E.M."/>
            <person name="Kamileen M.O."/>
            <person name="Sherden N.H."/>
            <person name="Geu-Flores F."/>
            <person name="Lawson D.M."/>
            <person name="O'Connor S.E."/>
        </authorList>
    </citation>
    <scope>X-RAY CRYSTALLOGRAPHY (1.40 ANGSTROMS) OF 23-388 IN COMPLEX WITH NADP</scope>
    <scope>CATALYTIC ACTIVITY</scope>
    <scope>SUBUNIT</scope>
</reference>
<sequence length="388" mass="43850">MSWWWKRSIGAGKNLPNQNKENGVCKSYKSVALVVGVTGIVGSSLAEVLKLPDTPGGPWKVYGVARRPCPVWLAKKPVEYIQCDVSDNQETISKLSPLKDITHIFYVSWIGSEDCQTNATMFKNILNSVIPNASNLQHVCLQTGIKHYFGIFEEGSKVVPHDSPFTEDLPRLNVPNFYHDLEDILYEETGKNNLTWSVHRPALVFGFSPCSMMNIVSTLCVYATICKHENKALVYPGSKNSWNCYADAVDADLVAEHEIWAAVDPKAKNQVLNCNNGDVFKWKHIWKKLAEEFGIEMVGYVEGKEQVSLAELMKDKDQVWDEIVKKNNLVPTKLKEIAAFWFADIAFCSENLISSMNKSKELGFLGFRNSMKSFVSCIDKMRDYRFIP</sequence>
<evidence type="ECO:0000269" key="1">
    <source>
    </source>
</evidence>
<evidence type="ECO:0000269" key="2">
    <source>
    </source>
</evidence>
<evidence type="ECO:0000269" key="3">
    <source>
    </source>
</evidence>
<evidence type="ECO:0000269" key="4">
    <source>
    </source>
</evidence>
<evidence type="ECO:0000269" key="5">
    <source>
    </source>
</evidence>
<evidence type="ECO:0000303" key="6">
    <source>
    </source>
</evidence>
<evidence type="ECO:0000305" key="7"/>
<evidence type="ECO:0000305" key="8">
    <source>
    </source>
</evidence>
<evidence type="ECO:0007744" key="9">
    <source>
        <dbReference type="PDB" id="5COB"/>
    </source>
</evidence>
<evidence type="ECO:0007744" key="10">
    <source>
        <dbReference type="PDB" id="5DBF"/>
    </source>
</evidence>
<evidence type="ECO:0007744" key="11">
    <source>
        <dbReference type="PDB" id="5DBI"/>
    </source>
</evidence>
<evidence type="ECO:0007744" key="12">
    <source>
        <dbReference type="PDB" id="5DF1"/>
    </source>
</evidence>
<evidence type="ECO:0007829" key="13">
    <source>
        <dbReference type="PDB" id="5COA"/>
    </source>
</evidence>
<evidence type="ECO:0007829" key="14">
    <source>
        <dbReference type="PDB" id="5COB"/>
    </source>
</evidence>
<evidence type="ECO:0007829" key="15">
    <source>
        <dbReference type="PDB" id="5DCU"/>
    </source>
</evidence>
<evidence type="ECO:0007829" key="16">
    <source>
        <dbReference type="PDB" id="5DCY"/>
    </source>
</evidence>
<evidence type="ECO:0007829" key="17">
    <source>
        <dbReference type="PDB" id="5DF1"/>
    </source>
</evidence>
<proteinExistence type="evidence at protein level"/>
<comment type="function">
    <text evidence="1 5">Iridoid synthase that catalyzes the first step in generation of the iridoid ring scaffold using the linear monoterpene (6E)-8-oxogeranial as substrate. Iridoids comprise a large family of distinctive bicyclic monoterpenes that possess a wide range of pharmacological activities, including anticancer, anti-inflammatory, antifungal and antibacterial activities.</text>
</comment>
<comment type="catalytic activity">
    <reaction evidence="1 3 4 5">
        <text>(S)-8-oxocitronellyl enol + NADP(+) = (6E)-8-oxogeranial + NADPH + H(+)</text>
        <dbReference type="Rhea" id="RHEA:62592"/>
        <dbReference type="ChEBI" id="CHEBI:15378"/>
        <dbReference type="ChEBI" id="CHEBI:57783"/>
        <dbReference type="ChEBI" id="CHEBI:58349"/>
        <dbReference type="ChEBI" id="CHEBI:64239"/>
        <dbReference type="ChEBI" id="CHEBI:144481"/>
        <dbReference type="EC" id="1.3.1.122"/>
    </reaction>
    <physiologicalReaction direction="right-to-left" evidence="1 3 4 5">
        <dbReference type="Rhea" id="RHEA:62594"/>
    </physiologicalReaction>
</comment>
<comment type="catalytic activity">
    <reaction evidence="1 3 4 5">
        <text>(S)-8-oxocitronellyl enol + NAD(+) = (6E)-8-oxogeranial + NADH + H(+)</text>
        <dbReference type="Rhea" id="RHEA:62596"/>
        <dbReference type="ChEBI" id="CHEBI:15378"/>
        <dbReference type="ChEBI" id="CHEBI:57540"/>
        <dbReference type="ChEBI" id="CHEBI:57945"/>
        <dbReference type="ChEBI" id="CHEBI:64239"/>
        <dbReference type="ChEBI" id="CHEBI:144481"/>
        <dbReference type="EC" id="1.3.1.122"/>
    </reaction>
    <physiologicalReaction direction="right-to-left" evidence="1 3 4 5">
        <dbReference type="Rhea" id="RHEA:62598"/>
    </physiologicalReaction>
</comment>
<comment type="biophysicochemical properties">
    <kinetics>
        <KM evidence="1">4.5 uM for (6E)-8-oxogeranial</KM>
        <KM evidence="4">10.6 uM for (6E)-8-oxogeranial</KM>
        <KM evidence="1">4.7 uM for NADPH</KM>
        <text>kcat is 1.6 sec(-1) with (6E)-8-oxogeranial. kcat is 2.2 sec(-1) with NADPH.</text>
    </kinetics>
</comment>
<comment type="subunit">
    <text evidence="1 2 3 4">Homodimer.</text>
</comment>
<comment type="interaction">
    <interactant intactId="EBI-16184393">
        <id>K7WDL7</id>
    </interactant>
    <interactant intactId="EBI-16184393">
        <id>K7WDL7</id>
        <label>-</label>
    </interactant>
    <organismsDiffer>false</organismsDiffer>
    <experiments>2</experiments>
</comment>
<comment type="subcellular location">
    <subcellularLocation>
        <location evidence="1">Cytoplasm</location>
        <location evidence="1">Cytosol</location>
    </subcellularLocation>
</comment>
<comment type="tissue specificity">
    <text evidence="1">Expressed in internal phloem-associated parenchyma (IPAP) cells.</text>
</comment>
<comment type="similarity">
    <text evidence="7">Belongs to the short-chain dehydrogenases/reductases (SDR) family. Highly divergent.</text>
</comment>
<comment type="caution">
    <text evidence="5 8">Was originally thought to catalyze the entire reaction from (6E)-8-oxogeranial to nepetalactol including a cyclase step (PubMed:23172143). New results have shown that the cyclase is a different enzyme and this enzyme exclusively catalyzes a reduction step (PubMed:30531909).</text>
</comment>
<dbReference type="EC" id="1.3.1.122" evidence="1 2 3 4"/>
<dbReference type="EMBL" id="JX974564">
    <property type="protein sequence ID" value="AFW98981.1"/>
    <property type="molecule type" value="mRNA"/>
</dbReference>
<dbReference type="PDB" id="5COA">
    <property type="method" value="X-ray"/>
    <property type="resolution" value="2.20 A"/>
    <property type="chains" value="A/B=26-388"/>
</dbReference>
<dbReference type="PDB" id="5COB">
    <property type="method" value="X-ray"/>
    <property type="resolution" value="2.65 A"/>
    <property type="chains" value="A/B/C/D=26-388"/>
</dbReference>
<dbReference type="PDB" id="5DBF">
    <property type="method" value="X-ray"/>
    <property type="resolution" value="2.00 A"/>
    <property type="chains" value="A/B=26-388"/>
</dbReference>
<dbReference type="PDB" id="5DBG">
    <property type="method" value="X-ray"/>
    <property type="resolution" value="1.95 A"/>
    <property type="chains" value="A/B=26-388"/>
</dbReference>
<dbReference type="PDB" id="5DBI">
    <property type="method" value="X-ray"/>
    <property type="resolution" value="2.20 A"/>
    <property type="chains" value="A/B=26-388"/>
</dbReference>
<dbReference type="PDB" id="5DCU">
    <property type="method" value="X-ray"/>
    <property type="resolution" value="1.40 A"/>
    <property type="chains" value="A/B=23-388"/>
</dbReference>
<dbReference type="PDB" id="5DCW">
    <property type="method" value="X-ray"/>
    <property type="resolution" value="1.90 A"/>
    <property type="chains" value="A=23-388"/>
</dbReference>
<dbReference type="PDB" id="5DCY">
    <property type="method" value="X-ray"/>
    <property type="resolution" value="1.45 A"/>
    <property type="chains" value="A/B=23-388"/>
</dbReference>
<dbReference type="PDB" id="5DF1">
    <property type="method" value="X-ray"/>
    <property type="resolution" value="1.75 A"/>
    <property type="chains" value="A/B=23-388"/>
</dbReference>
<dbReference type="PDB" id="5EMH">
    <property type="method" value="X-ray"/>
    <property type="resolution" value="2.10 A"/>
    <property type="chains" value="A=21-388"/>
</dbReference>
<dbReference type="PDBsum" id="5COA"/>
<dbReference type="PDBsum" id="5COB"/>
<dbReference type="PDBsum" id="5DBF"/>
<dbReference type="PDBsum" id="5DBG"/>
<dbReference type="PDBsum" id="5DBI"/>
<dbReference type="PDBsum" id="5DCU"/>
<dbReference type="PDBsum" id="5DCW"/>
<dbReference type="PDBsum" id="5DCY"/>
<dbReference type="PDBsum" id="5DF1"/>
<dbReference type="PDBsum" id="5EMH"/>
<dbReference type="SMR" id="K7WDL7"/>
<dbReference type="DIP" id="DIP-62000N"/>
<dbReference type="KEGG" id="ag:AFW98981"/>
<dbReference type="BioCyc" id="MetaCyc:MONOMER-20521"/>
<dbReference type="EvolutionaryTrace" id="K7WDL7"/>
<dbReference type="GO" id="GO:0005829">
    <property type="term" value="C:cytosol"/>
    <property type="evidence" value="ECO:0000314"/>
    <property type="project" value="UniProtKB"/>
</dbReference>
<dbReference type="GO" id="GO:0042802">
    <property type="term" value="F:identical protein binding"/>
    <property type="evidence" value="ECO:0000353"/>
    <property type="project" value="IntAct"/>
</dbReference>
<dbReference type="GO" id="GO:0016628">
    <property type="term" value="F:oxidoreductase activity, acting on the CH-CH group of donors, NAD or NADP as acceptor"/>
    <property type="evidence" value="ECO:0000314"/>
    <property type="project" value="UniProtKB"/>
</dbReference>
<dbReference type="GO" id="GO:0042803">
    <property type="term" value="F:protein homodimerization activity"/>
    <property type="evidence" value="ECO:0000314"/>
    <property type="project" value="UniProtKB"/>
</dbReference>
<dbReference type="GO" id="GO:0016099">
    <property type="term" value="P:monoterpenoid biosynthetic process"/>
    <property type="evidence" value="ECO:0000314"/>
    <property type="project" value="UniProtKB"/>
</dbReference>
<dbReference type="CDD" id="cd08948">
    <property type="entry name" value="5beta-POR_like_SDR_a"/>
    <property type="match status" value="1"/>
</dbReference>
<dbReference type="FunFam" id="3.40.50.720:FF:000808">
    <property type="entry name" value="Iridoid synthase"/>
    <property type="match status" value="1"/>
</dbReference>
<dbReference type="Gene3D" id="3.40.50.720">
    <property type="entry name" value="NAD(P)-binding Rossmann-like Domain"/>
    <property type="match status" value="1"/>
</dbReference>
<dbReference type="InterPro" id="IPR036291">
    <property type="entry name" value="NAD(P)-bd_dom_sf"/>
</dbReference>
<dbReference type="InterPro" id="IPR055222">
    <property type="entry name" value="PRISE-like_Rossmann-fold"/>
</dbReference>
<dbReference type="PANTHER" id="PTHR32487">
    <property type="entry name" value="3-OXO-DELTA(4,5)-STEROID 5-BETA-REDUCTASE"/>
    <property type="match status" value="1"/>
</dbReference>
<dbReference type="PANTHER" id="PTHR32487:SF32">
    <property type="entry name" value="NAD-DEPENDENT EPIMERASE_DEHYDRATASE DOMAIN-CONTAINING PROTEIN"/>
    <property type="match status" value="1"/>
</dbReference>
<dbReference type="Pfam" id="PF22917">
    <property type="entry name" value="PRISE"/>
    <property type="match status" value="1"/>
</dbReference>
<dbReference type="SUPFAM" id="SSF51735">
    <property type="entry name" value="NAD(P)-binding Rossmann-fold domains"/>
    <property type="match status" value="1"/>
</dbReference>
<accession>K7WDL7</accession>
<name>IRIS_CATRO</name>
<keyword id="KW-0002">3D-structure</keyword>
<keyword id="KW-0963">Cytoplasm</keyword>
<keyword id="KW-0520">NAD</keyword>
<keyword id="KW-0521">NADP</keyword>
<keyword id="KW-0560">Oxidoreductase</keyword>
<feature type="chain" id="PRO_0000422594" description="(S)-8-oxocitronellyl enol synthase">
    <location>
        <begin position="1"/>
        <end position="388"/>
    </location>
</feature>
<feature type="active site" evidence="3">
    <location>
        <position position="146"/>
    </location>
</feature>
<feature type="active site" evidence="3">
    <location>
        <position position="178"/>
    </location>
</feature>
<feature type="binding site" evidence="2 3 4 9 10 12">
    <location>
        <begin position="38"/>
        <end position="40"/>
    </location>
    <ligand>
        <name>NADP(+)</name>
        <dbReference type="ChEBI" id="CHEBI:58349"/>
    </ligand>
</feature>
<feature type="binding site" evidence="2 3 4 9 10 12">
    <location>
        <begin position="66"/>
        <end position="67"/>
    </location>
    <ligand>
        <name>NADP(+)</name>
        <dbReference type="ChEBI" id="CHEBI:58349"/>
    </ligand>
</feature>
<feature type="binding site" evidence="2 3 4 9 10 12">
    <location>
        <begin position="84"/>
        <end position="85"/>
    </location>
    <ligand>
        <name>NADP(+)</name>
        <dbReference type="ChEBI" id="CHEBI:58349"/>
    </ligand>
</feature>
<feature type="binding site" evidence="2 3 4 9 10 12">
    <location>
        <begin position="108"/>
        <end position="109"/>
    </location>
    <ligand>
        <name>NADP(+)</name>
        <dbReference type="ChEBI" id="CHEBI:58349"/>
    </ligand>
</feature>
<feature type="binding site" evidence="2 3 4 9 10 12">
    <location>
        <position position="142"/>
    </location>
    <ligand>
        <name>NADP(+)</name>
        <dbReference type="ChEBI" id="CHEBI:58349"/>
    </ligand>
</feature>
<feature type="binding site" evidence="3 11">
    <location>
        <position position="146"/>
    </location>
    <ligand>
        <name>substrate</name>
    </ligand>
</feature>
<feature type="binding site" evidence="2 3 4 9 10 12">
    <location>
        <position position="178"/>
    </location>
    <ligand>
        <name>NADP(+)</name>
        <dbReference type="ChEBI" id="CHEBI:58349"/>
    </ligand>
</feature>
<feature type="binding site" evidence="3 4 9 11">
    <location>
        <position position="178"/>
    </location>
    <ligand>
        <name>substrate</name>
    </ligand>
</feature>
<feature type="binding site" evidence="2 3 4 9 10 12">
    <location>
        <position position="204"/>
    </location>
    <ligand>
        <name>NADP(+)</name>
        <dbReference type="ChEBI" id="CHEBI:58349"/>
    </ligand>
</feature>
<feature type="binding site" evidence="2 3 4 9 10 12">
    <location>
        <begin position="211"/>
        <end position="213"/>
    </location>
    <ligand>
        <name>NADP(+)</name>
        <dbReference type="ChEBI" id="CHEBI:58349"/>
    </ligand>
</feature>
<feature type="binding site" evidence="3 4 9">
    <location>
        <position position="349"/>
    </location>
    <ligand>
        <name>substrate</name>
    </ligand>
</feature>
<feature type="mutagenesis site" description="Reduces enzymatic activity 6-fold." evidence="3">
    <original>K</original>
    <variation>A</variation>
    <location>
        <position position="146"/>
    </location>
</feature>
<feature type="mutagenesis site" description="Slightly reduces enzymatic activity." evidence="3">
    <original>F</original>
    <variation>M</variation>
    <location>
        <position position="149"/>
    </location>
</feature>
<feature type="mutagenesis site" description="Abolishes enzymatic activity." evidence="3">
    <original>Y</original>
    <variation>A</variation>
    <variation>F</variation>
    <location>
        <position position="178"/>
    </location>
</feature>
<feature type="mutagenesis site" description="Abolishes enzymatic activity." evidence="3">
    <original>F</original>
    <variation>A</variation>
    <location>
        <position position="342"/>
    </location>
</feature>
<feature type="mutagenesis site" description="No effect on enzymatic activity." evidence="3">
    <original>A</original>
    <variation>I</variation>
    <location>
        <position position="346"/>
    </location>
</feature>
<feature type="mutagenesis site" description="No effect on enzymatic activity." evidence="3">
    <original>S</original>
    <variation>F</variation>
    <location>
        <position position="349"/>
    </location>
</feature>
<feature type="strand" evidence="15">
    <location>
        <begin position="29"/>
        <end position="36"/>
    </location>
</feature>
<feature type="helix" evidence="15">
    <location>
        <begin position="42"/>
        <end position="48"/>
    </location>
</feature>
<feature type="strand" evidence="14">
    <location>
        <begin position="51"/>
        <end position="54"/>
    </location>
</feature>
<feature type="strand" evidence="15">
    <location>
        <begin position="58"/>
        <end position="67"/>
    </location>
</feature>
<feature type="helix" evidence="15">
    <location>
        <begin position="71"/>
        <end position="74"/>
    </location>
</feature>
<feature type="strand" evidence="15">
    <location>
        <begin position="79"/>
        <end position="82"/>
    </location>
</feature>
<feature type="helix" evidence="15">
    <location>
        <begin position="88"/>
        <end position="95"/>
    </location>
</feature>
<feature type="strand" evidence="15">
    <location>
        <begin position="103"/>
        <end position="106"/>
    </location>
</feature>
<feature type="strand" evidence="13">
    <location>
        <begin position="111"/>
        <end position="113"/>
    </location>
</feature>
<feature type="helix" evidence="15">
    <location>
        <begin position="115"/>
        <end position="129"/>
    </location>
</feature>
<feature type="turn" evidence="15">
    <location>
        <begin position="130"/>
        <end position="132"/>
    </location>
</feature>
<feature type="strand" evidence="15">
    <location>
        <begin position="138"/>
        <end position="142"/>
    </location>
</feature>
<feature type="helix" evidence="15">
    <location>
        <begin position="146"/>
        <end position="149"/>
    </location>
</feature>
<feature type="turn" evidence="16">
    <location>
        <begin position="153"/>
        <end position="156"/>
    </location>
</feature>
<feature type="strand" evidence="15">
    <location>
        <begin position="163"/>
        <end position="165"/>
    </location>
</feature>
<feature type="helix" evidence="15">
    <location>
        <begin position="177"/>
        <end position="191"/>
    </location>
</feature>
<feature type="strand" evidence="15">
    <location>
        <begin position="195"/>
        <end position="201"/>
    </location>
</feature>
<feature type="strand" evidence="15">
    <location>
        <begin position="203"/>
        <end position="205"/>
    </location>
</feature>
<feature type="helix" evidence="15">
    <location>
        <begin position="215"/>
        <end position="228"/>
    </location>
</feature>
<feature type="helix" evidence="15">
    <location>
        <begin position="239"/>
        <end position="243"/>
    </location>
</feature>
<feature type="strand" evidence="17">
    <location>
        <begin position="248"/>
        <end position="250"/>
    </location>
</feature>
<feature type="helix" evidence="15">
    <location>
        <begin position="251"/>
        <end position="263"/>
    </location>
</feature>
<feature type="helix" evidence="15">
    <location>
        <begin position="265"/>
        <end position="267"/>
    </location>
</feature>
<feature type="strand" evidence="15">
    <location>
        <begin position="270"/>
        <end position="274"/>
    </location>
</feature>
<feature type="helix" evidence="15">
    <location>
        <begin position="282"/>
        <end position="293"/>
    </location>
</feature>
<feature type="helix" evidence="15">
    <location>
        <begin position="309"/>
        <end position="313"/>
    </location>
</feature>
<feature type="helix" evidence="15">
    <location>
        <begin position="317"/>
        <end position="327"/>
    </location>
</feature>
<feature type="helix" evidence="15">
    <location>
        <begin position="334"/>
        <end position="337"/>
    </location>
</feature>
<feature type="helix" evidence="15">
    <location>
        <begin position="340"/>
        <end position="346"/>
    </location>
</feature>
<feature type="helix" evidence="15">
    <location>
        <begin position="357"/>
        <end position="361"/>
    </location>
</feature>
<feature type="helix" evidence="15">
    <location>
        <begin position="370"/>
        <end position="383"/>
    </location>
</feature>
<organism>
    <name type="scientific">Catharanthus roseus</name>
    <name type="common">Madagascar periwinkle</name>
    <name type="synonym">Vinca rosea</name>
    <dbReference type="NCBI Taxonomy" id="4058"/>
    <lineage>
        <taxon>Eukaryota</taxon>
        <taxon>Viridiplantae</taxon>
        <taxon>Streptophyta</taxon>
        <taxon>Embryophyta</taxon>
        <taxon>Tracheophyta</taxon>
        <taxon>Spermatophyta</taxon>
        <taxon>Magnoliopsida</taxon>
        <taxon>eudicotyledons</taxon>
        <taxon>Gunneridae</taxon>
        <taxon>Pentapetalae</taxon>
        <taxon>asterids</taxon>
        <taxon>lamiids</taxon>
        <taxon>Gentianales</taxon>
        <taxon>Apocynaceae</taxon>
        <taxon>Rauvolfioideae</taxon>
        <taxon>Vinceae</taxon>
        <taxon>Catharanthinae</taxon>
        <taxon>Catharanthus</taxon>
    </lineage>
</organism>